<evidence type="ECO:0000255" key="1">
    <source>
        <dbReference type="HAMAP-Rule" id="MF_00051"/>
    </source>
</evidence>
<proteinExistence type="inferred from homology"/>
<name>GLYA_YERPB</name>
<protein>
    <recommendedName>
        <fullName evidence="1">Serine hydroxymethyltransferase</fullName>
        <shortName evidence="1">SHMT</shortName>
        <shortName evidence="1">Serine methylase</shortName>
        <ecNumber evidence="1">2.1.2.1</ecNumber>
    </recommendedName>
</protein>
<organism>
    <name type="scientific">Yersinia pseudotuberculosis serotype IB (strain PB1/+)</name>
    <dbReference type="NCBI Taxonomy" id="502801"/>
    <lineage>
        <taxon>Bacteria</taxon>
        <taxon>Pseudomonadati</taxon>
        <taxon>Pseudomonadota</taxon>
        <taxon>Gammaproteobacteria</taxon>
        <taxon>Enterobacterales</taxon>
        <taxon>Yersiniaceae</taxon>
        <taxon>Yersinia</taxon>
    </lineage>
</organism>
<dbReference type="EC" id="2.1.2.1" evidence="1"/>
<dbReference type="EMBL" id="CP001048">
    <property type="protein sequence ID" value="ACC89935.1"/>
    <property type="molecule type" value="Genomic_DNA"/>
</dbReference>
<dbReference type="RefSeq" id="WP_002211552.1">
    <property type="nucleotide sequence ID" value="NZ_CP009780.1"/>
</dbReference>
<dbReference type="SMR" id="B2K9S8"/>
<dbReference type="GeneID" id="57975864"/>
<dbReference type="KEGG" id="ypb:YPTS_2978"/>
<dbReference type="PATRIC" id="fig|502801.10.peg.2409"/>
<dbReference type="UniPathway" id="UPA00193"/>
<dbReference type="UniPathway" id="UPA00288">
    <property type="reaction ID" value="UER01023"/>
</dbReference>
<dbReference type="GO" id="GO:0005829">
    <property type="term" value="C:cytosol"/>
    <property type="evidence" value="ECO:0007669"/>
    <property type="project" value="TreeGrafter"/>
</dbReference>
<dbReference type="GO" id="GO:0004372">
    <property type="term" value="F:glycine hydroxymethyltransferase activity"/>
    <property type="evidence" value="ECO:0007669"/>
    <property type="project" value="UniProtKB-UniRule"/>
</dbReference>
<dbReference type="GO" id="GO:0030170">
    <property type="term" value="F:pyridoxal phosphate binding"/>
    <property type="evidence" value="ECO:0007669"/>
    <property type="project" value="UniProtKB-UniRule"/>
</dbReference>
<dbReference type="GO" id="GO:0019264">
    <property type="term" value="P:glycine biosynthetic process from serine"/>
    <property type="evidence" value="ECO:0007669"/>
    <property type="project" value="UniProtKB-UniRule"/>
</dbReference>
<dbReference type="GO" id="GO:0035999">
    <property type="term" value="P:tetrahydrofolate interconversion"/>
    <property type="evidence" value="ECO:0007669"/>
    <property type="project" value="UniProtKB-UniRule"/>
</dbReference>
<dbReference type="CDD" id="cd00378">
    <property type="entry name" value="SHMT"/>
    <property type="match status" value="1"/>
</dbReference>
<dbReference type="FunFam" id="3.40.640.10:FF:000001">
    <property type="entry name" value="Serine hydroxymethyltransferase"/>
    <property type="match status" value="1"/>
</dbReference>
<dbReference type="FunFam" id="3.90.1150.10:FF:000003">
    <property type="entry name" value="Serine hydroxymethyltransferase"/>
    <property type="match status" value="1"/>
</dbReference>
<dbReference type="Gene3D" id="3.90.1150.10">
    <property type="entry name" value="Aspartate Aminotransferase, domain 1"/>
    <property type="match status" value="1"/>
</dbReference>
<dbReference type="Gene3D" id="3.40.640.10">
    <property type="entry name" value="Type I PLP-dependent aspartate aminotransferase-like (Major domain)"/>
    <property type="match status" value="1"/>
</dbReference>
<dbReference type="HAMAP" id="MF_00051">
    <property type="entry name" value="SHMT"/>
    <property type="match status" value="1"/>
</dbReference>
<dbReference type="InterPro" id="IPR015424">
    <property type="entry name" value="PyrdxlP-dep_Trfase"/>
</dbReference>
<dbReference type="InterPro" id="IPR015421">
    <property type="entry name" value="PyrdxlP-dep_Trfase_major"/>
</dbReference>
<dbReference type="InterPro" id="IPR015422">
    <property type="entry name" value="PyrdxlP-dep_Trfase_small"/>
</dbReference>
<dbReference type="InterPro" id="IPR001085">
    <property type="entry name" value="Ser_HO-MeTrfase"/>
</dbReference>
<dbReference type="InterPro" id="IPR049943">
    <property type="entry name" value="Ser_HO-MeTrfase-like"/>
</dbReference>
<dbReference type="InterPro" id="IPR019798">
    <property type="entry name" value="Ser_HO-MeTrfase_PLP_BS"/>
</dbReference>
<dbReference type="InterPro" id="IPR039429">
    <property type="entry name" value="SHMT-like_dom"/>
</dbReference>
<dbReference type="NCBIfam" id="NF000586">
    <property type="entry name" value="PRK00011.1"/>
    <property type="match status" value="1"/>
</dbReference>
<dbReference type="PANTHER" id="PTHR11680">
    <property type="entry name" value="SERINE HYDROXYMETHYLTRANSFERASE"/>
    <property type="match status" value="1"/>
</dbReference>
<dbReference type="PANTHER" id="PTHR11680:SF50">
    <property type="entry name" value="SERINE HYDROXYMETHYLTRANSFERASE"/>
    <property type="match status" value="1"/>
</dbReference>
<dbReference type="Pfam" id="PF00464">
    <property type="entry name" value="SHMT"/>
    <property type="match status" value="1"/>
</dbReference>
<dbReference type="PIRSF" id="PIRSF000412">
    <property type="entry name" value="SHMT"/>
    <property type="match status" value="1"/>
</dbReference>
<dbReference type="SUPFAM" id="SSF53383">
    <property type="entry name" value="PLP-dependent transferases"/>
    <property type="match status" value="1"/>
</dbReference>
<dbReference type="PROSITE" id="PS00096">
    <property type="entry name" value="SHMT"/>
    <property type="match status" value="1"/>
</dbReference>
<comment type="function">
    <text evidence="1">Catalyzes the reversible interconversion of serine and glycine with tetrahydrofolate (THF) serving as the one-carbon carrier. This reaction serves as the major source of one-carbon groups required for the biosynthesis of purines, thymidylate, methionine, and other important biomolecules. Also exhibits THF-independent aldolase activity toward beta-hydroxyamino acids, producing glycine and aldehydes, via a retro-aldol mechanism.</text>
</comment>
<comment type="catalytic activity">
    <reaction evidence="1">
        <text>(6R)-5,10-methylene-5,6,7,8-tetrahydrofolate + glycine + H2O = (6S)-5,6,7,8-tetrahydrofolate + L-serine</text>
        <dbReference type="Rhea" id="RHEA:15481"/>
        <dbReference type="ChEBI" id="CHEBI:15377"/>
        <dbReference type="ChEBI" id="CHEBI:15636"/>
        <dbReference type="ChEBI" id="CHEBI:33384"/>
        <dbReference type="ChEBI" id="CHEBI:57305"/>
        <dbReference type="ChEBI" id="CHEBI:57453"/>
        <dbReference type="EC" id="2.1.2.1"/>
    </reaction>
</comment>
<comment type="cofactor">
    <cofactor evidence="1">
        <name>pyridoxal 5'-phosphate</name>
        <dbReference type="ChEBI" id="CHEBI:597326"/>
    </cofactor>
</comment>
<comment type="pathway">
    <text evidence="1">One-carbon metabolism; tetrahydrofolate interconversion.</text>
</comment>
<comment type="pathway">
    <text evidence="1">Amino-acid biosynthesis; glycine biosynthesis; glycine from L-serine: step 1/1.</text>
</comment>
<comment type="subunit">
    <text evidence="1">Homodimer.</text>
</comment>
<comment type="subcellular location">
    <subcellularLocation>
        <location evidence="1">Cytoplasm</location>
    </subcellularLocation>
</comment>
<comment type="similarity">
    <text evidence="1">Belongs to the SHMT family.</text>
</comment>
<reference key="1">
    <citation type="submission" date="2008-04" db="EMBL/GenBank/DDBJ databases">
        <title>Complete sequence of Yersinia pseudotuberculosis PB1/+.</title>
        <authorList>
            <person name="Copeland A."/>
            <person name="Lucas S."/>
            <person name="Lapidus A."/>
            <person name="Glavina del Rio T."/>
            <person name="Dalin E."/>
            <person name="Tice H."/>
            <person name="Bruce D."/>
            <person name="Goodwin L."/>
            <person name="Pitluck S."/>
            <person name="Munk A.C."/>
            <person name="Brettin T."/>
            <person name="Detter J.C."/>
            <person name="Han C."/>
            <person name="Tapia R."/>
            <person name="Schmutz J."/>
            <person name="Larimer F."/>
            <person name="Land M."/>
            <person name="Hauser L."/>
            <person name="Challacombe J.F."/>
            <person name="Green L."/>
            <person name="Lindler L.E."/>
            <person name="Nikolich M.P."/>
            <person name="Richardson P."/>
        </authorList>
    </citation>
    <scope>NUCLEOTIDE SEQUENCE [LARGE SCALE GENOMIC DNA]</scope>
    <source>
        <strain>PB1/+</strain>
    </source>
</reference>
<gene>
    <name evidence="1" type="primary">glyA</name>
    <name type="ordered locus">YPTS_2978</name>
</gene>
<keyword id="KW-0028">Amino-acid biosynthesis</keyword>
<keyword id="KW-0963">Cytoplasm</keyword>
<keyword id="KW-0554">One-carbon metabolism</keyword>
<keyword id="KW-0663">Pyridoxal phosphate</keyword>
<keyword id="KW-0808">Transferase</keyword>
<sequence length="417" mass="45422">MLKREMNIADYDADLWRAMEQEVVRQEEHIELIASENYTSPRVMQAQGSQLTNKYAEGYPGKRYYGGCEYVDVVEQLAIDRAKALFGADYANVQPHSGSQANVAVYSALLKPGDTVLGMNLAHGGHLTHGSPVNFSGKLYNIVPYGIDESGQIDYEDLARQAEIHKPKMIIGGFSAYSGIVDWAKMREIADSIDAWFFVDMAHVAGLVAAGVYPNPVPHAHIVTTTTHKTLAGPRGGLILAKGGDEDLYKKLNSSVFPGNQGGPLMHVIAGKAVALKEAMEPEFKIYQQQVAKNAKAMVAVFLERGYKVVSGGTDNHLFLLDLVDKDITGKDADAALGRANITVNKNSVPNDPKSPFVTSGVRIGSPAITRRGFKEAESRELAGWMCDVLDNINDEATIERVKQKVLAICARLPVYA</sequence>
<feature type="chain" id="PRO_1000091599" description="Serine hydroxymethyltransferase">
    <location>
        <begin position="1"/>
        <end position="417"/>
    </location>
</feature>
<feature type="binding site" evidence="1">
    <location>
        <position position="121"/>
    </location>
    <ligand>
        <name>(6S)-5,6,7,8-tetrahydrofolate</name>
        <dbReference type="ChEBI" id="CHEBI:57453"/>
    </ligand>
</feature>
<feature type="binding site" evidence="1">
    <location>
        <begin position="125"/>
        <end position="127"/>
    </location>
    <ligand>
        <name>(6S)-5,6,7,8-tetrahydrofolate</name>
        <dbReference type="ChEBI" id="CHEBI:57453"/>
    </ligand>
</feature>
<feature type="binding site" evidence="1">
    <location>
        <begin position="355"/>
        <end position="357"/>
    </location>
    <ligand>
        <name>(6S)-5,6,7,8-tetrahydrofolate</name>
        <dbReference type="ChEBI" id="CHEBI:57453"/>
    </ligand>
</feature>
<feature type="site" description="Plays an important role in substrate specificity" evidence="1">
    <location>
        <position position="228"/>
    </location>
</feature>
<feature type="modified residue" description="N6-(pyridoxal phosphate)lysine" evidence="1">
    <location>
        <position position="229"/>
    </location>
</feature>
<accession>B2K9S8</accession>